<keyword id="KW-0030">Aminoacyl-tRNA synthetase</keyword>
<keyword id="KW-0067">ATP-binding</keyword>
<keyword id="KW-0963">Cytoplasm</keyword>
<keyword id="KW-0436">Ligase</keyword>
<keyword id="KW-0547">Nucleotide-binding</keyword>
<keyword id="KW-0648">Protein biosynthesis</keyword>
<keyword id="KW-1185">Reference proteome</keyword>
<accession>A2SD40</accession>
<organism>
    <name type="scientific">Methylibium petroleiphilum (strain ATCC BAA-1232 / LMG 22953 / PM1)</name>
    <dbReference type="NCBI Taxonomy" id="420662"/>
    <lineage>
        <taxon>Bacteria</taxon>
        <taxon>Pseudomonadati</taxon>
        <taxon>Pseudomonadota</taxon>
        <taxon>Betaproteobacteria</taxon>
        <taxon>Burkholderiales</taxon>
        <taxon>Sphaerotilaceae</taxon>
        <taxon>Methylibium</taxon>
    </lineage>
</organism>
<evidence type="ECO:0000255" key="1">
    <source>
        <dbReference type="HAMAP-Rule" id="MF_01569"/>
    </source>
</evidence>
<gene>
    <name evidence="1" type="primary">proS</name>
    <name type="ordered locus">Mpe_A0517</name>
</gene>
<reference key="1">
    <citation type="journal article" date="2007" name="J. Bacteriol.">
        <title>Whole-genome analysis of the methyl tert-butyl ether-degrading beta-proteobacterium Methylibium petroleiphilum PM1.</title>
        <authorList>
            <person name="Kane S.R."/>
            <person name="Chakicherla A.Y."/>
            <person name="Chain P.S.G."/>
            <person name="Schmidt R."/>
            <person name="Shin M.W."/>
            <person name="Legler T.C."/>
            <person name="Scow K.M."/>
            <person name="Larimer F.W."/>
            <person name="Lucas S.M."/>
            <person name="Richardson P.M."/>
            <person name="Hristova K.R."/>
        </authorList>
    </citation>
    <scope>NUCLEOTIDE SEQUENCE [LARGE SCALE GENOMIC DNA]</scope>
    <source>
        <strain>ATCC BAA-1232 / LMG 22953 / PM1</strain>
    </source>
</reference>
<proteinExistence type="inferred from homology"/>
<dbReference type="EC" id="6.1.1.15" evidence="1"/>
<dbReference type="EMBL" id="CP000555">
    <property type="protein sequence ID" value="ABM93479.1"/>
    <property type="molecule type" value="Genomic_DNA"/>
</dbReference>
<dbReference type="RefSeq" id="WP_011828117.1">
    <property type="nucleotide sequence ID" value="NC_008825.1"/>
</dbReference>
<dbReference type="SMR" id="A2SD40"/>
<dbReference type="STRING" id="420662.Mpe_A0517"/>
<dbReference type="KEGG" id="mpt:Mpe_A0517"/>
<dbReference type="eggNOG" id="COG0442">
    <property type="taxonomic scope" value="Bacteria"/>
</dbReference>
<dbReference type="HOGENOM" id="CLU_016739_0_0_4"/>
<dbReference type="Proteomes" id="UP000000366">
    <property type="component" value="Chromosome"/>
</dbReference>
<dbReference type="GO" id="GO:0005829">
    <property type="term" value="C:cytosol"/>
    <property type="evidence" value="ECO:0007669"/>
    <property type="project" value="TreeGrafter"/>
</dbReference>
<dbReference type="GO" id="GO:0002161">
    <property type="term" value="F:aminoacyl-tRNA deacylase activity"/>
    <property type="evidence" value="ECO:0007669"/>
    <property type="project" value="InterPro"/>
</dbReference>
<dbReference type="GO" id="GO:0005524">
    <property type="term" value="F:ATP binding"/>
    <property type="evidence" value="ECO:0007669"/>
    <property type="project" value="UniProtKB-UniRule"/>
</dbReference>
<dbReference type="GO" id="GO:0004827">
    <property type="term" value="F:proline-tRNA ligase activity"/>
    <property type="evidence" value="ECO:0007669"/>
    <property type="project" value="UniProtKB-UniRule"/>
</dbReference>
<dbReference type="GO" id="GO:0006433">
    <property type="term" value="P:prolyl-tRNA aminoacylation"/>
    <property type="evidence" value="ECO:0007669"/>
    <property type="project" value="UniProtKB-UniRule"/>
</dbReference>
<dbReference type="CDD" id="cd04334">
    <property type="entry name" value="ProRS-INS"/>
    <property type="match status" value="1"/>
</dbReference>
<dbReference type="CDD" id="cd00861">
    <property type="entry name" value="ProRS_anticodon_short"/>
    <property type="match status" value="1"/>
</dbReference>
<dbReference type="CDD" id="cd00779">
    <property type="entry name" value="ProRS_core_prok"/>
    <property type="match status" value="1"/>
</dbReference>
<dbReference type="FunFam" id="3.30.930.10:FF:000042">
    <property type="entry name" value="probable proline--tRNA ligase, mitochondrial"/>
    <property type="match status" value="1"/>
</dbReference>
<dbReference type="FunFam" id="3.30.930.10:FF:000015">
    <property type="entry name" value="Proline--tRNA ligase"/>
    <property type="match status" value="1"/>
</dbReference>
<dbReference type="Gene3D" id="3.40.50.800">
    <property type="entry name" value="Anticodon-binding domain"/>
    <property type="match status" value="1"/>
</dbReference>
<dbReference type="Gene3D" id="3.30.930.10">
    <property type="entry name" value="Bira Bifunctional Protein, Domain 2"/>
    <property type="match status" value="2"/>
</dbReference>
<dbReference type="Gene3D" id="3.90.960.10">
    <property type="entry name" value="YbaK/aminoacyl-tRNA synthetase-associated domain"/>
    <property type="match status" value="1"/>
</dbReference>
<dbReference type="HAMAP" id="MF_01569">
    <property type="entry name" value="Pro_tRNA_synth_type1"/>
    <property type="match status" value="1"/>
</dbReference>
<dbReference type="InterPro" id="IPR002314">
    <property type="entry name" value="aa-tRNA-synt_IIb"/>
</dbReference>
<dbReference type="InterPro" id="IPR006195">
    <property type="entry name" value="aa-tRNA-synth_II"/>
</dbReference>
<dbReference type="InterPro" id="IPR045864">
    <property type="entry name" value="aa-tRNA-synth_II/BPL/LPL"/>
</dbReference>
<dbReference type="InterPro" id="IPR004154">
    <property type="entry name" value="Anticodon-bd"/>
</dbReference>
<dbReference type="InterPro" id="IPR036621">
    <property type="entry name" value="Anticodon-bd_dom_sf"/>
</dbReference>
<dbReference type="InterPro" id="IPR002316">
    <property type="entry name" value="Pro-tRNA-ligase_IIa"/>
</dbReference>
<dbReference type="InterPro" id="IPR004500">
    <property type="entry name" value="Pro-tRNA-synth_IIa_bac-type"/>
</dbReference>
<dbReference type="InterPro" id="IPR023717">
    <property type="entry name" value="Pro-tRNA-Synthase_IIa_type1"/>
</dbReference>
<dbReference type="InterPro" id="IPR050062">
    <property type="entry name" value="Pro-tRNA_synthetase"/>
</dbReference>
<dbReference type="InterPro" id="IPR044140">
    <property type="entry name" value="ProRS_anticodon_short"/>
</dbReference>
<dbReference type="InterPro" id="IPR033730">
    <property type="entry name" value="ProRS_core_prok"/>
</dbReference>
<dbReference type="InterPro" id="IPR036754">
    <property type="entry name" value="YbaK/aa-tRNA-synt-asso_dom_sf"/>
</dbReference>
<dbReference type="InterPro" id="IPR007214">
    <property type="entry name" value="YbaK/aa-tRNA-synth-assoc-dom"/>
</dbReference>
<dbReference type="NCBIfam" id="NF006625">
    <property type="entry name" value="PRK09194.1"/>
    <property type="match status" value="1"/>
</dbReference>
<dbReference type="NCBIfam" id="TIGR00409">
    <property type="entry name" value="proS_fam_II"/>
    <property type="match status" value="1"/>
</dbReference>
<dbReference type="PANTHER" id="PTHR42753">
    <property type="entry name" value="MITOCHONDRIAL RIBOSOME PROTEIN L39/PROLYL-TRNA LIGASE FAMILY MEMBER"/>
    <property type="match status" value="1"/>
</dbReference>
<dbReference type="PANTHER" id="PTHR42753:SF2">
    <property type="entry name" value="PROLINE--TRNA LIGASE"/>
    <property type="match status" value="1"/>
</dbReference>
<dbReference type="Pfam" id="PF03129">
    <property type="entry name" value="HGTP_anticodon"/>
    <property type="match status" value="1"/>
</dbReference>
<dbReference type="Pfam" id="PF00587">
    <property type="entry name" value="tRNA-synt_2b"/>
    <property type="match status" value="1"/>
</dbReference>
<dbReference type="Pfam" id="PF04073">
    <property type="entry name" value="tRNA_edit"/>
    <property type="match status" value="1"/>
</dbReference>
<dbReference type="PIRSF" id="PIRSF001535">
    <property type="entry name" value="ProRS_1"/>
    <property type="match status" value="1"/>
</dbReference>
<dbReference type="PRINTS" id="PR01046">
    <property type="entry name" value="TRNASYNTHPRO"/>
</dbReference>
<dbReference type="SUPFAM" id="SSF52954">
    <property type="entry name" value="Class II aaRS ABD-related"/>
    <property type="match status" value="1"/>
</dbReference>
<dbReference type="SUPFAM" id="SSF55681">
    <property type="entry name" value="Class II aaRS and biotin synthetases"/>
    <property type="match status" value="1"/>
</dbReference>
<dbReference type="SUPFAM" id="SSF55826">
    <property type="entry name" value="YbaK/ProRS associated domain"/>
    <property type="match status" value="1"/>
</dbReference>
<dbReference type="PROSITE" id="PS50862">
    <property type="entry name" value="AA_TRNA_LIGASE_II"/>
    <property type="match status" value="1"/>
</dbReference>
<name>SYP_METPP</name>
<comment type="function">
    <text evidence="1">Catalyzes the attachment of proline to tRNA(Pro) in a two-step reaction: proline is first activated by ATP to form Pro-AMP and then transferred to the acceptor end of tRNA(Pro). As ProRS can inadvertently accommodate and process non-cognate amino acids such as alanine and cysteine, to avoid such errors it has two additional distinct editing activities against alanine. One activity is designated as 'pretransfer' editing and involves the tRNA(Pro)-independent hydrolysis of activated Ala-AMP. The other activity is designated 'posttransfer' editing and involves deacylation of mischarged Ala-tRNA(Pro). The misacylated Cys-tRNA(Pro) is not edited by ProRS.</text>
</comment>
<comment type="catalytic activity">
    <reaction evidence="1">
        <text>tRNA(Pro) + L-proline + ATP = L-prolyl-tRNA(Pro) + AMP + diphosphate</text>
        <dbReference type="Rhea" id="RHEA:14305"/>
        <dbReference type="Rhea" id="RHEA-COMP:9700"/>
        <dbReference type="Rhea" id="RHEA-COMP:9702"/>
        <dbReference type="ChEBI" id="CHEBI:30616"/>
        <dbReference type="ChEBI" id="CHEBI:33019"/>
        <dbReference type="ChEBI" id="CHEBI:60039"/>
        <dbReference type="ChEBI" id="CHEBI:78442"/>
        <dbReference type="ChEBI" id="CHEBI:78532"/>
        <dbReference type="ChEBI" id="CHEBI:456215"/>
        <dbReference type="EC" id="6.1.1.15"/>
    </reaction>
</comment>
<comment type="subunit">
    <text evidence="1">Homodimer.</text>
</comment>
<comment type="subcellular location">
    <subcellularLocation>
        <location evidence="1">Cytoplasm</location>
    </subcellularLocation>
</comment>
<comment type="domain">
    <text evidence="1">Consists of three domains: the N-terminal catalytic domain, the editing domain and the C-terminal anticodon-binding domain.</text>
</comment>
<comment type="similarity">
    <text evidence="1">Belongs to the class-II aminoacyl-tRNA synthetase family. ProS type 1 subfamily.</text>
</comment>
<sequence>MKASQFFVSTLKEAPADAEITSHKLMMRAGMIKRLGAGIYSYMPMGLRVIRKVEAIIREEMNRAGAVELLMPVVQPAELWQETGRFEKMGPELMRVKDRHDRDFIIQPTSEEVVTDIARQELRSYRQLPKNFYHIQTKFRDERRPRFGVMRGREFTMKDAYSFDRDEAAAGRSYDAMYAAYGRIFDRFGLSYRAVAADTGAIGGDRSHEFQVIAETGEDAIVYCPTSDYAANIELAECLPLAAQRPVPIQPLTKTPTPGKATCADVAALLNLPLTQTVKSLVLATDDRNDGGDIVKTTVWLLLVRGDHELNEVKAGKLPGLKAGFRFATVGEIDAHFGCKPGYLGPIGLKQPVRVIADRTVAHMGDFVCGANDADFHYTGVNWGRDLPEPDLVADIRNAVVGDPSPDGKGVLAIQRGIEVGHVFYLGTKYSAAMNATYLDETGKPRLMEMGCYGIGVTRILGAAIEQRHDARGIVWPTAIAPFEVVICPIGYDRSAEVRQAADTLHDELQALGMDLMLDDRGERPGAMFADWELIGIPQRVVISDRGLKEGQVELQGRQEAEAGKLAVAEVVAQLRARLRD</sequence>
<protein>
    <recommendedName>
        <fullName evidence="1">Proline--tRNA ligase</fullName>
        <ecNumber evidence="1">6.1.1.15</ecNumber>
    </recommendedName>
    <alternativeName>
        <fullName evidence="1">Prolyl-tRNA synthetase</fullName>
        <shortName evidence="1">ProRS</shortName>
    </alternativeName>
</protein>
<feature type="chain" id="PRO_0000288347" description="Proline--tRNA ligase">
    <location>
        <begin position="1"/>
        <end position="581"/>
    </location>
</feature>